<reference key="1">
    <citation type="journal article" date="2003" name="J. Bacteriol.">
        <title>Comparative analyses of the complete genome sequences of Pierce's disease and citrus variegated chlorosis strains of Xylella fastidiosa.</title>
        <authorList>
            <person name="Van Sluys M.A."/>
            <person name="de Oliveira M.C."/>
            <person name="Monteiro-Vitorello C.B."/>
            <person name="Miyaki C.Y."/>
            <person name="Furlan L.R."/>
            <person name="Camargo L.E.A."/>
            <person name="da Silva A.C.R."/>
            <person name="Moon D.H."/>
            <person name="Takita M.A."/>
            <person name="Lemos E.G.M."/>
            <person name="Machado M.A."/>
            <person name="Ferro M.I.T."/>
            <person name="da Silva F.R."/>
            <person name="Goldman M.H.S."/>
            <person name="Goldman G.H."/>
            <person name="Lemos M.V.F."/>
            <person name="El-Dorry H."/>
            <person name="Tsai S.M."/>
            <person name="Carrer H."/>
            <person name="Carraro D.M."/>
            <person name="de Oliveira R.C."/>
            <person name="Nunes L.R."/>
            <person name="Siqueira W.J."/>
            <person name="Coutinho L.L."/>
            <person name="Kimura E.T."/>
            <person name="Ferro E.S."/>
            <person name="Harakava R."/>
            <person name="Kuramae E.E."/>
            <person name="Marino C.L."/>
            <person name="Giglioti E."/>
            <person name="Abreu I.L."/>
            <person name="Alves L.M.C."/>
            <person name="do Amaral A.M."/>
            <person name="Baia G.S."/>
            <person name="Blanco S.R."/>
            <person name="Brito M.S."/>
            <person name="Cannavan F.S."/>
            <person name="Celestino A.V."/>
            <person name="da Cunha A.F."/>
            <person name="Fenille R.C."/>
            <person name="Ferro J.A."/>
            <person name="Formighieri E.F."/>
            <person name="Kishi L.T."/>
            <person name="Leoni S.G."/>
            <person name="Oliveira A.R."/>
            <person name="Rosa V.E. Jr."/>
            <person name="Sassaki F.T."/>
            <person name="Sena J.A.D."/>
            <person name="de Souza A.A."/>
            <person name="Truffi D."/>
            <person name="Tsukumo F."/>
            <person name="Yanai G.M."/>
            <person name="Zaros L.G."/>
            <person name="Civerolo E.L."/>
            <person name="Simpson A.J.G."/>
            <person name="Almeida N.F. Jr."/>
            <person name="Setubal J.C."/>
            <person name="Kitajima J.P."/>
        </authorList>
    </citation>
    <scope>NUCLEOTIDE SEQUENCE [LARGE SCALE GENOMIC DNA]</scope>
    <source>
        <strain>Temecula1 / ATCC 700964</strain>
    </source>
</reference>
<feature type="chain" id="PRO_0000161239" description="Elongation factor Ts">
    <location>
        <begin position="1"/>
        <end position="292"/>
    </location>
</feature>
<feature type="region of interest" description="Involved in Mg(2+) ion dislocation from EF-Tu" evidence="1">
    <location>
        <begin position="79"/>
        <end position="82"/>
    </location>
</feature>
<name>EFTS_XYLFT</name>
<gene>
    <name evidence="1" type="primary">tsf</name>
    <name type="ordered locus">PD_1959</name>
</gene>
<accession>Q87A70</accession>
<protein>
    <recommendedName>
        <fullName evidence="1">Elongation factor Ts</fullName>
        <shortName evidence="1">EF-Ts</shortName>
    </recommendedName>
</protein>
<comment type="function">
    <text evidence="1">Associates with the EF-Tu.GDP complex and induces the exchange of GDP to GTP. It remains bound to the aminoacyl-tRNA.EF-Tu.GTP complex up to the GTP hydrolysis stage on the ribosome.</text>
</comment>
<comment type="subcellular location">
    <subcellularLocation>
        <location evidence="1">Cytoplasm</location>
    </subcellularLocation>
</comment>
<comment type="similarity">
    <text evidence="1">Belongs to the EF-Ts family.</text>
</comment>
<evidence type="ECO:0000255" key="1">
    <source>
        <dbReference type="HAMAP-Rule" id="MF_00050"/>
    </source>
</evidence>
<dbReference type="EMBL" id="AE009442">
    <property type="protein sequence ID" value="AAO29789.1"/>
    <property type="molecule type" value="Genomic_DNA"/>
</dbReference>
<dbReference type="RefSeq" id="WP_004090323.1">
    <property type="nucleotide sequence ID" value="NC_004556.1"/>
</dbReference>
<dbReference type="SMR" id="Q87A70"/>
<dbReference type="GeneID" id="93905821"/>
<dbReference type="KEGG" id="xft:PD_1959"/>
<dbReference type="HOGENOM" id="CLU_047155_0_0_6"/>
<dbReference type="Proteomes" id="UP000002516">
    <property type="component" value="Chromosome"/>
</dbReference>
<dbReference type="GO" id="GO:0005737">
    <property type="term" value="C:cytoplasm"/>
    <property type="evidence" value="ECO:0007669"/>
    <property type="project" value="UniProtKB-SubCell"/>
</dbReference>
<dbReference type="GO" id="GO:0003746">
    <property type="term" value="F:translation elongation factor activity"/>
    <property type="evidence" value="ECO:0007669"/>
    <property type="project" value="UniProtKB-UniRule"/>
</dbReference>
<dbReference type="CDD" id="cd14275">
    <property type="entry name" value="UBA_EF-Ts"/>
    <property type="match status" value="1"/>
</dbReference>
<dbReference type="FunFam" id="1.10.286.20:FF:000001">
    <property type="entry name" value="Elongation factor Ts"/>
    <property type="match status" value="1"/>
</dbReference>
<dbReference type="FunFam" id="1.10.8.10:FF:000001">
    <property type="entry name" value="Elongation factor Ts"/>
    <property type="match status" value="1"/>
</dbReference>
<dbReference type="FunFam" id="3.30.479.20:FF:000001">
    <property type="entry name" value="Elongation factor Ts"/>
    <property type="match status" value="1"/>
</dbReference>
<dbReference type="Gene3D" id="1.10.286.20">
    <property type="match status" value="1"/>
</dbReference>
<dbReference type="Gene3D" id="1.10.8.10">
    <property type="entry name" value="DNA helicase RuvA subunit, C-terminal domain"/>
    <property type="match status" value="1"/>
</dbReference>
<dbReference type="Gene3D" id="3.30.479.20">
    <property type="entry name" value="Elongation factor Ts, dimerisation domain"/>
    <property type="match status" value="2"/>
</dbReference>
<dbReference type="HAMAP" id="MF_00050">
    <property type="entry name" value="EF_Ts"/>
    <property type="match status" value="1"/>
</dbReference>
<dbReference type="InterPro" id="IPR036402">
    <property type="entry name" value="EF-Ts_dimer_sf"/>
</dbReference>
<dbReference type="InterPro" id="IPR001816">
    <property type="entry name" value="Transl_elong_EFTs/EF1B"/>
</dbReference>
<dbReference type="InterPro" id="IPR014039">
    <property type="entry name" value="Transl_elong_EFTs/EF1B_dimer"/>
</dbReference>
<dbReference type="InterPro" id="IPR018101">
    <property type="entry name" value="Transl_elong_Ts_CS"/>
</dbReference>
<dbReference type="InterPro" id="IPR009060">
    <property type="entry name" value="UBA-like_sf"/>
</dbReference>
<dbReference type="NCBIfam" id="TIGR00116">
    <property type="entry name" value="tsf"/>
    <property type="match status" value="1"/>
</dbReference>
<dbReference type="PANTHER" id="PTHR11741">
    <property type="entry name" value="ELONGATION FACTOR TS"/>
    <property type="match status" value="1"/>
</dbReference>
<dbReference type="PANTHER" id="PTHR11741:SF0">
    <property type="entry name" value="ELONGATION FACTOR TS, MITOCHONDRIAL"/>
    <property type="match status" value="1"/>
</dbReference>
<dbReference type="Pfam" id="PF00889">
    <property type="entry name" value="EF_TS"/>
    <property type="match status" value="1"/>
</dbReference>
<dbReference type="SUPFAM" id="SSF54713">
    <property type="entry name" value="Elongation factor Ts (EF-Ts), dimerisation domain"/>
    <property type="match status" value="2"/>
</dbReference>
<dbReference type="SUPFAM" id="SSF46934">
    <property type="entry name" value="UBA-like"/>
    <property type="match status" value="1"/>
</dbReference>
<dbReference type="PROSITE" id="PS01126">
    <property type="entry name" value="EF_TS_1"/>
    <property type="match status" value="1"/>
</dbReference>
<dbReference type="PROSITE" id="PS01127">
    <property type="entry name" value="EF_TS_2"/>
    <property type="match status" value="1"/>
</dbReference>
<proteinExistence type="inferred from homology"/>
<organism>
    <name type="scientific">Xylella fastidiosa (strain Temecula1 / ATCC 700964)</name>
    <dbReference type="NCBI Taxonomy" id="183190"/>
    <lineage>
        <taxon>Bacteria</taxon>
        <taxon>Pseudomonadati</taxon>
        <taxon>Pseudomonadota</taxon>
        <taxon>Gammaproteobacteria</taxon>
        <taxon>Lysobacterales</taxon>
        <taxon>Lysobacteraceae</taxon>
        <taxon>Xylella</taxon>
    </lineage>
</organism>
<sequence>MEITASLVKELRERTGVGMMECKKALSENAGNIDASVEWLRKSGLVKADKKAGRIAAEGRIVVVHDGCKAVLVEINSETDFVAKDSHFLAFAEAVAQAALVAGAADVEALKHVKLPSGETVEETRAAVIAKIGENVRVRRLARIDSANNVAAYVHGGRIGVLVEVKGGDVELARGIAMHVAAMNPPYNKVADVSAEFLEKEKEIELSKMSEKDKSKPADILEKIISGKINKIVKEVTLYGQPYVLNPDQSVEQVVKAAGADVIGFQRMEVGEGIEKIVEDYASEVMKQAGLS</sequence>
<keyword id="KW-0963">Cytoplasm</keyword>
<keyword id="KW-0251">Elongation factor</keyword>
<keyword id="KW-0648">Protein biosynthesis</keyword>
<keyword id="KW-1185">Reference proteome</keyword>